<dbReference type="EC" id="4.2.99.20" evidence="1"/>
<dbReference type="EMBL" id="CP000034">
    <property type="protein sequence ID" value="ABB62530.1"/>
    <property type="molecule type" value="Genomic_DNA"/>
</dbReference>
<dbReference type="RefSeq" id="WP_000600553.1">
    <property type="nucleotide sequence ID" value="NC_007606.1"/>
</dbReference>
<dbReference type="RefSeq" id="YP_404021.1">
    <property type="nucleotide sequence ID" value="NC_007606.1"/>
</dbReference>
<dbReference type="SMR" id="Q32DS5"/>
<dbReference type="STRING" id="300267.SDY_2459"/>
<dbReference type="ESTHER" id="shifl-YFBB">
    <property type="family name" value="MenH_SHCHC"/>
</dbReference>
<dbReference type="EnsemblBacteria" id="ABB62530">
    <property type="protein sequence ID" value="ABB62530"/>
    <property type="gene ID" value="SDY_2459"/>
</dbReference>
<dbReference type="KEGG" id="sdy:SDY_2459"/>
<dbReference type="PATRIC" id="fig|300267.13.peg.2966"/>
<dbReference type="HOGENOM" id="CLU_020336_38_2_6"/>
<dbReference type="UniPathway" id="UPA00079"/>
<dbReference type="UniPathway" id="UPA01057">
    <property type="reaction ID" value="UER00900"/>
</dbReference>
<dbReference type="Proteomes" id="UP000002716">
    <property type="component" value="Chromosome"/>
</dbReference>
<dbReference type="GO" id="GO:0070205">
    <property type="term" value="F:2-succinyl-6-hydroxy-2,4-cyclohexadiene-1-carboxylate synthase activity"/>
    <property type="evidence" value="ECO:0007669"/>
    <property type="project" value="UniProtKB-UniRule"/>
</dbReference>
<dbReference type="GO" id="GO:0009234">
    <property type="term" value="P:menaquinone biosynthetic process"/>
    <property type="evidence" value="ECO:0007669"/>
    <property type="project" value="UniProtKB-UniRule"/>
</dbReference>
<dbReference type="FunFam" id="3.40.50.1820:FF:000038">
    <property type="entry name" value="2-succinyl-6-hydroxy-2,4-cyclohexadiene-1-carboxylate synthase"/>
    <property type="match status" value="1"/>
</dbReference>
<dbReference type="Gene3D" id="3.40.50.1820">
    <property type="entry name" value="alpha/beta hydrolase"/>
    <property type="match status" value="1"/>
</dbReference>
<dbReference type="HAMAP" id="MF_01660">
    <property type="entry name" value="MenH"/>
    <property type="match status" value="1"/>
</dbReference>
<dbReference type="InterPro" id="IPR000073">
    <property type="entry name" value="AB_hydrolase_1"/>
</dbReference>
<dbReference type="InterPro" id="IPR029058">
    <property type="entry name" value="AB_hydrolase_fold"/>
</dbReference>
<dbReference type="InterPro" id="IPR022485">
    <property type="entry name" value="SHCHC_synthase_MenH"/>
</dbReference>
<dbReference type="NCBIfam" id="TIGR03695">
    <property type="entry name" value="menH_SHCHC"/>
    <property type="match status" value="1"/>
</dbReference>
<dbReference type="NCBIfam" id="NF008340">
    <property type="entry name" value="PRK11126.1"/>
    <property type="match status" value="1"/>
</dbReference>
<dbReference type="PANTHER" id="PTHR42916">
    <property type="entry name" value="2-SUCCINYL-5-ENOLPYRUVYL-6-HYDROXY-3-CYCLOHEXENE-1-CARBOXYLATE SYNTHASE"/>
    <property type="match status" value="1"/>
</dbReference>
<dbReference type="PANTHER" id="PTHR42916:SF1">
    <property type="entry name" value="PROTEIN PHYLLO, CHLOROPLASTIC"/>
    <property type="match status" value="1"/>
</dbReference>
<dbReference type="Pfam" id="PF12697">
    <property type="entry name" value="Abhydrolase_6"/>
    <property type="match status" value="1"/>
</dbReference>
<dbReference type="SUPFAM" id="SSF53474">
    <property type="entry name" value="alpha/beta-Hydrolases"/>
    <property type="match status" value="1"/>
</dbReference>
<organism>
    <name type="scientific">Shigella dysenteriae serotype 1 (strain Sd197)</name>
    <dbReference type="NCBI Taxonomy" id="300267"/>
    <lineage>
        <taxon>Bacteria</taxon>
        <taxon>Pseudomonadati</taxon>
        <taxon>Pseudomonadota</taxon>
        <taxon>Gammaproteobacteria</taxon>
        <taxon>Enterobacterales</taxon>
        <taxon>Enterobacteriaceae</taxon>
        <taxon>Shigella</taxon>
    </lineage>
</organism>
<accession>Q32DS5</accession>
<reference key="1">
    <citation type="journal article" date="2005" name="Nucleic Acids Res.">
        <title>Genome dynamics and diversity of Shigella species, the etiologic agents of bacillary dysentery.</title>
        <authorList>
            <person name="Yang F."/>
            <person name="Yang J."/>
            <person name="Zhang X."/>
            <person name="Chen L."/>
            <person name="Jiang Y."/>
            <person name="Yan Y."/>
            <person name="Tang X."/>
            <person name="Wang J."/>
            <person name="Xiong Z."/>
            <person name="Dong J."/>
            <person name="Xue Y."/>
            <person name="Zhu Y."/>
            <person name="Xu X."/>
            <person name="Sun L."/>
            <person name="Chen S."/>
            <person name="Nie H."/>
            <person name="Peng J."/>
            <person name="Xu J."/>
            <person name="Wang Y."/>
            <person name="Yuan Z."/>
            <person name="Wen Y."/>
            <person name="Yao Z."/>
            <person name="Shen Y."/>
            <person name="Qiang B."/>
            <person name="Hou Y."/>
            <person name="Yu J."/>
            <person name="Jin Q."/>
        </authorList>
    </citation>
    <scope>NUCLEOTIDE SEQUENCE [LARGE SCALE GENOMIC DNA]</scope>
    <source>
        <strain>Sd197</strain>
    </source>
</reference>
<feature type="chain" id="PRO_0000341925" description="2-succinyl-6-hydroxy-2,4-cyclohexadiene-1-carboxylate synthase">
    <location>
        <begin position="1"/>
        <end position="252"/>
    </location>
</feature>
<keyword id="KW-0456">Lyase</keyword>
<keyword id="KW-0474">Menaquinone biosynthesis</keyword>
<keyword id="KW-1185">Reference proteome</keyword>
<name>MENH_SHIDS</name>
<gene>
    <name evidence="1" type="primary">menH</name>
    <name type="ordered locus">SDY_2459</name>
</gene>
<comment type="function">
    <text evidence="1">Catalyzes a proton abstraction reaction that results in 2,5-elimination of pyruvate from 2-succinyl-5-enolpyruvyl-6-hydroxy-3-cyclohexene-1-carboxylate (SEPHCHC) and the formation of 2-succinyl-6-hydroxy-2,4-cyclohexadiene-1-carboxylate (SHCHC).</text>
</comment>
<comment type="catalytic activity">
    <reaction evidence="1">
        <text>5-enolpyruvoyl-6-hydroxy-2-succinyl-cyclohex-3-ene-1-carboxylate = (1R,6R)-6-hydroxy-2-succinyl-cyclohexa-2,4-diene-1-carboxylate + pyruvate</text>
        <dbReference type="Rhea" id="RHEA:25597"/>
        <dbReference type="ChEBI" id="CHEBI:15361"/>
        <dbReference type="ChEBI" id="CHEBI:58689"/>
        <dbReference type="ChEBI" id="CHEBI:58818"/>
        <dbReference type="EC" id="4.2.99.20"/>
    </reaction>
</comment>
<comment type="pathway">
    <text evidence="1">Quinol/quinone metabolism; 1,4-dihydroxy-2-naphthoate biosynthesis; 1,4-dihydroxy-2-naphthoate from chorismate: step 3/7.</text>
</comment>
<comment type="pathway">
    <text evidence="1">Quinol/quinone metabolism; menaquinone biosynthesis.</text>
</comment>
<comment type="subunit">
    <text evidence="1">Monomer.</text>
</comment>
<comment type="similarity">
    <text evidence="1">Belongs to the AB hydrolase superfamily. MenH family.</text>
</comment>
<proteinExistence type="inferred from homology"/>
<sequence length="252" mass="27755">MILHAQTKHGKPGLPWLVFLHGFSGDCHEWQEVGEVFADYSRLYVDLPGHGGSAAISVDGFDDVTDLLRKTLVSYNILDFWLVGYSLGGRVAMMAACQGLAGLCGVIVEGGHPGLQNAEQRAERQRSDRQWAQRFRTEPLTAVFADWYQQPVFASLNDDQRRELVALRSNNNGATLAAMLEATSLAVQPDLRANLSARTFAFYYLCGERDSKFRALAAELAADCHVIPRAGHNAHRENPAGVIASLAQILRF</sequence>
<protein>
    <recommendedName>
        <fullName evidence="1">2-succinyl-6-hydroxy-2,4-cyclohexadiene-1-carboxylate synthase</fullName>
        <shortName evidence="1">SHCHC synthase</shortName>
        <ecNumber evidence="1">4.2.99.20</ecNumber>
    </recommendedName>
</protein>
<evidence type="ECO:0000255" key="1">
    <source>
        <dbReference type="HAMAP-Rule" id="MF_01660"/>
    </source>
</evidence>